<comment type="subunit">
    <text evidence="1">Interacts with impact.</text>
</comment>
<comment type="similarity">
    <text evidence="2">Belongs to the eukaryotic ribosomal protein eL39 family.</text>
</comment>
<organism>
    <name type="scientific">Ictalurus punctatus</name>
    <name type="common">Channel catfish</name>
    <name type="synonym">Silurus punctatus</name>
    <dbReference type="NCBI Taxonomy" id="7998"/>
    <lineage>
        <taxon>Eukaryota</taxon>
        <taxon>Metazoa</taxon>
        <taxon>Chordata</taxon>
        <taxon>Craniata</taxon>
        <taxon>Vertebrata</taxon>
        <taxon>Euteleostomi</taxon>
        <taxon>Actinopterygii</taxon>
        <taxon>Neopterygii</taxon>
        <taxon>Teleostei</taxon>
        <taxon>Ostariophysi</taxon>
        <taxon>Siluriformes</taxon>
        <taxon>Ictaluridae</taxon>
        <taxon>Ictalurus</taxon>
    </lineage>
</organism>
<name>RL39_ICTPU</name>
<dbReference type="EMBL" id="AF401596">
    <property type="protein sequence ID" value="AAK95168.1"/>
    <property type="molecule type" value="mRNA"/>
</dbReference>
<dbReference type="RefSeq" id="NP_001187217.1">
    <property type="nucleotide sequence ID" value="NM_001200288.1"/>
</dbReference>
<dbReference type="SMR" id="Q90YS9"/>
<dbReference type="STRING" id="7998.ENSIPUP00000028479"/>
<dbReference type="Ensembl" id="ENSIPUT00015078282">
    <property type="protein sequence ID" value="ENSIPUP00015068759"/>
    <property type="gene ID" value="ENSIPUG00015030201"/>
</dbReference>
<dbReference type="Ensembl" id="ENSIPUT00015078284">
    <property type="protein sequence ID" value="ENSIPUP00015068761"/>
    <property type="gene ID" value="ENSIPUG00015030201"/>
</dbReference>
<dbReference type="GeneID" id="100305053"/>
<dbReference type="KEGG" id="ipu:100305053"/>
<dbReference type="CTD" id="6170"/>
<dbReference type="OMA" id="RRTKMNI"/>
<dbReference type="OrthoDB" id="6332053at2759"/>
<dbReference type="Proteomes" id="UP000221080">
    <property type="component" value="Chromosome 8"/>
</dbReference>
<dbReference type="GO" id="GO:0022625">
    <property type="term" value="C:cytosolic large ribosomal subunit"/>
    <property type="evidence" value="ECO:0007669"/>
    <property type="project" value="TreeGrafter"/>
</dbReference>
<dbReference type="GO" id="GO:0003735">
    <property type="term" value="F:structural constituent of ribosome"/>
    <property type="evidence" value="ECO:0007669"/>
    <property type="project" value="InterPro"/>
</dbReference>
<dbReference type="GO" id="GO:0006412">
    <property type="term" value="P:translation"/>
    <property type="evidence" value="ECO:0007669"/>
    <property type="project" value="InterPro"/>
</dbReference>
<dbReference type="FunFam" id="1.10.1620.10:FF:000001">
    <property type="entry name" value="60S ribosomal protein-like L39"/>
    <property type="match status" value="1"/>
</dbReference>
<dbReference type="Gene3D" id="1.10.1620.10">
    <property type="entry name" value="Ribosomal protein L39e"/>
    <property type="match status" value="1"/>
</dbReference>
<dbReference type="HAMAP" id="MF_00629">
    <property type="entry name" value="Ribosomal_eL39"/>
    <property type="match status" value="1"/>
</dbReference>
<dbReference type="InterPro" id="IPR000077">
    <property type="entry name" value="Ribosomal_eL39"/>
</dbReference>
<dbReference type="InterPro" id="IPR020083">
    <property type="entry name" value="Ribosomal_eL39_CS"/>
</dbReference>
<dbReference type="InterPro" id="IPR023626">
    <property type="entry name" value="Ribosomal_eL39_dom_sf"/>
</dbReference>
<dbReference type="PANTHER" id="PTHR19970:SF0">
    <property type="entry name" value="LARGE RIBOSOMAL SUBUNIT PROTEIN EL39"/>
    <property type="match status" value="1"/>
</dbReference>
<dbReference type="PANTHER" id="PTHR19970">
    <property type="entry name" value="RIBOSOMAL PROTEIN L39E"/>
    <property type="match status" value="1"/>
</dbReference>
<dbReference type="Pfam" id="PF00832">
    <property type="entry name" value="Ribosomal_L39"/>
    <property type="match status" value="1"/>
</dbReference>
<dbReference type="SUPFAM" id="SSF48662">
    <property type="entry name" value="Ribosomal protein L39e"/>
    <property type="match status" value="1"/>
</dbReference>
<dbReference type="PROSITE" id="PS00051">
    <property type="entry name" value="RIBOSOMAL_L39E"/>
    <property type="match status" value="1"/>
</dbReference>
<sequence length="51" mass="6391">MASHKTFRIKRFLAKKQKQNRPIPQWIRMKTGNKIRYNSKRRHWRRTKLGL</sequence>
<feature type="chain" id="PRO_0000127029" description="Large ribosomal subunit protein eL39">
    <location>
        <begin position="1"/>
        <end position="51"/>
    </location>
</feature>
<protein>
    <recommendedName>
        <fullName evidence="2">Large ribosomal subunit protein eL39</fullName>
    </recommendedName>
    <alternativeName>
        <fullName>60S ribosomal protein L39</fullName>
    </alternativeName>
</protein>
<keyword id="KW-0687">Ribonucleoprotein</keyword>
<keyword id="KW-0689">Ribosomal protein</keyword>
<reference key="1">
    <citation type="journal article" date="2003" name="Gene">
        <title>Translational machinery of channel catfish: II. Complementary DNA and expression of the complete set of 47 60S ribosomal proteins.</title>
        <authorList>
            <person name="Patterson A.P."/>
            <person name="Karsi A."/>
            <person name="Feng J."/>
            <person name="Liu Z.J."/>
        </authorList>
    </citation>
    <scope>NUCLEOTIDE SEQUENCE [MRNA]</scope>
</reference>
<proteinExistence type="inferred from homology"/>
<accession>Q90YS9</accession>
<gene>
    <name type="primary">rpl39</name>
</gene>
<evidence type="ECO:0000250" key="1">
    <source>
        <dbReference type="UniProtKB" id="P62892"/>
    </source>
</evidence>
<evidence type="ECO:0000305" key="2"/>